<dbReference type="EC" id="3.6.1.66" evidence="1"/>
<dbReference type="EMBL" id="GG698900">
    <property type="protein sequence ID" value="EEU44604.1"/>
    <property type="molecule type" value="Genomic_DNA"/>
</dbReference>
<dbReference type="RefSeq" id="XP_003050317.1">
    <property type="nucleotide sequence ID" value="XM_003050271.1"/>
</dbReference>
<dbReference type="SMR" id="C7YTE3"/>
<dbReference type="FunCoup" id="C7YTE3">
    <property type="interactions" value="741"/>
</dbReference>
<dbReference type="STRING" id="660122.C7YTE3"/>
<dbReference type="EnsemblFungi" id="NechaT105230">
    <property type="protein sequence ID" value="NechaP105230"/>
    <property type="gene ID" value="NechaG105230"/>
</dbReference>
<dbReference type="GeneID" id="9665724"/>
<dbReference type="KEGG" id="nhe:NECHADRAFT_105230"/>
<dbReference type="VEuPathDB" id="FungiDB:NECHADRAFT_105230"/>
<dbReference type="eggNOG" id="KOG3222">
    <property type="taxonomic scope" value="Eukaryota"/>
</dbReference>
<dbReference type="HOGENOM" id="CLU_082080_1_1_1"/>
<dbReference type="InParanoid" id="C7YTE3"/>
<dbReference type="OMA" id="YDPIFQP"/>
<dbReference type="OrthoDB" id="6288734at2759"/>
<dbReference type="Proteomes" id="UP000005206">
    <property type="component" value="Unassembled WGS sequence"/>
</dbReference>
<dbReference type="GO" id="GO:0005737">
    <property type="term" value="C:cytoplasm"/>
    <property type="evidence" value="ECO:0007669"/>
    <property type="project" value="UniProtKB-SubCell"/>
</dbReference>
<dbReference type="GO" id="GO:0005634">
    <property type="term" value="C:nucleus"/>
    <property type="evidence" value="ECO:0007669"/>
    <property type="project" value="UniProtKB-SubCell"/>
</dbReference>
<dbReference type="GO" id="GO:0035870">
    <property type="term" value="F:dITP diphosphatase activity"/>
    <property type="evidence" value="ECO:0007669"/>
    <property type="project" value="RHEA"/>
</dbReference>
<dbReference type="GO" id="GO:0036220">
    <property type="term" value="F:ITP diphosphatase activity"/>
    <property type="evidence" value="ECO:0007669"/>
    <property type="project" value="RHEA"/>
</dbReference>
<dbReference type="GO" id="GO:0046872">
    <property type="term" value="F:metal ion binding"/>
    <property type="evidence" value="ECO:0007669"/>
    <property type="project" value="UniProtKB-KW"/>
</dbReference>
<dbReference type="GO" id="GO:0000166">
    <property type="term" value="F:nucleotide binding"/>
    <property type="evidence" value="ECO:0007669"/>
    <property type="project" value="UniProtKB-KW"/>
</dbReference>
<dbReference type="GO" id="GO:0036222">
    <property type="term" value="F:XTP diphosphatase activity"/>
    <property type="evidence" value="ECO:0007669"/>
    <property type="project" value="RHEA"/>
</dbReference>
<dbReference type="GO" id="GO:0009204">
    <property type="term" value="P:deoxyribonucleoside triphosphate catabolic process"/>
    <property type="evidence" value="ECO:0007669"/>
    <property type="project" value="UniProtKB-UniRule"/>
</dbReference>
<dbReference type="GO" id="GO:0009117">
    <property type="term" value="P:nucleotide metabolic process"/>
    <property type="evidence" value="ECO:0007669"/>
    <property type="project" value="UniProtKB-KW"/>
</dbReference>
<dbReference type="CDD" id="cd00515">
    <property type="entry name" value="HAM1"/>
    <property type="match status" value="1"/>
</dbReference>
<dbReference type="FunFam" id="3.90.950.10:FF:000003">
    <property type="entry name" value="Inosine triphosphate pyrophosphatase"/>
    <property type="match status" value="1"/>
</dbReference>
<dbReference type="Gene3D" id="3.90.950.10">
    <property type="match status" value="1"/>
</dbReference>
<dbReference type="HAMAP" id="MF_03148">
    <property type="entry name" value="HAM1_NTPase"/>
    <property type="match status" value="1"/>
</dbReference>
<dbReference type="InterPro" id="IPR027502">
    <property type="entry name" value="ITPase"/>
</dbReference>
<dbReference type="InterPro" id="IPR029001">
    <property type="entry name" value="ITPase-like_fam"/>
</dbReference>
<dbReference type="InterPro" id="IPR002637">
    <property type="entry name" value="RdgB/HAM1"/>
</dbReference>
<dbReference type="NCBIfam" id="TIGR00042">
    <property type="entry name" value="RdgB/HAM1 family non-canonical purine NTP pyrophosphatase"/>
    <property type="match status" value="1"/>
</dbReference>
<dbReference type="PANTHER" id="PTHR11067:SF9">
    <property type="entry name" value="INOSINE TRIPHOSPHATE PYROPHOSPHATASE"/>
    <property type="match status" value="1"/>
</dbReference>
<dbReference type="PANTHER" id="PTHR11067">
    <property type="entry name" value="INOSINE TRIPHOSPHATE PYROPHOSPHATASE/HAM1 PROTEIN"/>
    <property type="match status" value="1"/>
</dbReference>
<dbReference type="Pfam" id="PF01725">
    <property type="entry name" value="Ham1p_like"/>
    <property type="match status" value="1"/>
</dbReference>
<dbReference type="SUPFAM" id="SSF52972">
    <property type="entry name" value="ITPase-like"/>
    <property type="match status" value="1"/>
</dbReference>
<gene>
    <name type="ORF">NECHADRAFT_105230</name>
</gene>
<feature type="chain" id="PRO_0000413143" description="Inosine triphosphate pyrophosphatase">
    <location>
        <begin position="1"/>
        <end position="184"/>
    </location>
</feature>
<feature type="binding site" evidence="1">
    <location>
        <begin position="10"/>
        <end position="15"/>
    </location>
    <ligand>
        <name>ITP</name>
        <dbReference type="ChEBI" id="CHEBI:61402"/>
    </ligand>
</feature>
<feature type="binding site" evidence="1">
    <location>
        <position position="38"/>
    </location>
    <ligand>
        <name>Mg(2+)</name>
        <dbReference type="ChEBI" id="CHEBI:18420"/>
    </ligand>
</feature>
<feature type="binding site" evidence="1">
    <location>
        <position position="50"/>
    </location>
    <ligand>
        <name>ITP</name>
        <dbReference type="ChEBI" id="CHEBI:61402"/>
    </ligand>
</feature>
<feature type="binding site" evidence="1">
    <location>
        <begin position="66"/>
        <end position="67"/>
    </location>
    <ligand>
        <name>ITP</name>
        <dbReference type="ChEBI" id="CHEBI:61402"/>
    </ligand>
</feature>
<feature type="binding site" evidence="1">
    <location>
        <position position="83"/>
    </location>
    <ligand>
        <name>ITP</name>
        <dbReference type="ChEBI" id="CHEBI:61402"/>
    </ligand>
</feature>
<feature type="binding site" evidence="1">
    <location>
        <begin position="142"/>
        <end position="145"/>
    </location>
    <ligand>
        <name>ITP</name>
        <dbReference type="ChEBI" id="CHEBI:61402"/>
    </ligand>
</feature>
<feature type="binding site" evidence="1">
    <location>
        <position position="163"/>
    </location>
    <ligand>
        <name>ITP</name>
        <dbReference type="ChEBI" id="CHEBI:61402"/>
    </ligand>
</feature>
<feature type="binding site" evidence="1">
    <location>
        <begin position="168"/>
        <end position="169"/>
    </location>
    <ligand>
        <name>ITP</name>
        <dbReference type="ChEBI" id="CHEBI:61402"/>
    </ligand>
</feature>
<reference key="1">
    <citation type="journal article" date="2009" name="PLoS Genet.">
        <title>The genome of Nectria haematococca: contribution of supernumerary chromosomes to gene expansion.</title>
        <authorList>
            <person name="Coleman J.J."/>
            <person name="Rounsley S.D."/>
            <person name="Rodriguez-Carres M."/>
            <person name="Kuo A."/>
            <person name="Wasmann C.C."/>
            <person name="Grimwood J."/>
            <person name="Schmutz J."/>
            <person name="Taga M."/>
            <person name="White G.J."/>
            <person name="Zhou S."/>
            <person name="Schwartz D.C."/>
            <person name="Freitag M."/>
            <person name="Ma L.-J."/>
            <person name="Danchin E.G.J."/>
            <person name="Henrissat B."/>
            <person name="Coutinho P.M."/>
            <person name="Nelson D.R."/>
            <person name="Straney D."/>
            <person name="Napoli C.A."/>
            <person name="Barker B.M."/>
            <person name="Gribskov M."/>
            <person name="Rep M."/>
            <person name="Kroken S."/>
            <person name="Molnar I."/>
            <person name="Rensing C."/>
            <person name="Kennell J.C."/>
            <person name="Zamora J."/>
            <person name="Farman M.L."/>
            <person name="Selker E.U."/>
            <person name="Salamov A."/>
            <person name="Shapiro H."/>
            <person name="Pangilinan J."/>
            <person name="Lindquist E."/>
            <person name="Lamers C."/>
            <person name="Grigoriev I.V."/>
            <person name="Geiser D.M."/>
            <person name="Covert S.F."/>
            <person name="Temporini E."/>
            <person name="VanEtten H.D."/>
        </authorList>
    </citation>
    <scope>NUCLEOTIDE SEQUENCE [LARGE SCALE GENOMIC DNA]</scope>
    <source>
        <strain>ATCC MYA-4622 / CBS 123669 / FGSC 9596 / NRRL 45880 / 77-13-4</strain>
    </source>
</reference>
<accession>C7YTE3</accession>
<comment type="function">
    <text evidence="1">Pyrophosphatase that hydrolyzes non-canonical purine nucleotides such as inosine triphosphate (ITP), deoxyinosine triphosphate (dITP) or xanthosine 5'-triphosphate (XTP) to their respective monophosphate derivatives. The enzyme does not distinguish between the deoxy- and ribose forms. Probably excludes non-canonical purines from RNA and DNA precursor pools, thus preventing their incorporation into RNA and DNA and avoiding chromosomal lesions.</text>
</comment>
<comment type="catalytic activity">
    <reaction evidence="1">
        <text>ITP + H2O = IMP + diphosphate + H(+)</text>
        <dbReference type="Rhea" id="RHEA:29399"/>
        <dbReference type="ChEBI" id="CHEBI:15377"/>
        <dbReference type="ChEBI" id="CHEBI:15378"/>
        <dbReference type="ChEBI" id="CHEBI:33019"/>
        <dbReference type="ChEBI" id="CHEBI:58053"/>
        <dbReference type="ChEBI" id="CHEBI:61402"/>
        <dbReference type="EC" id="3.6.1.66"/>
    </reaction>
    <physiologicalReaction direction="left-to-right" evidence="1">
        <dbReference type="Rhea" id="RHEA:29400"/>
    </physiologicalReaction>
</comment>
<comment type="catalytic activity">
    <reaction evidence="1">
        <text>dITP + H2O = dIMP + diphosphate + H(+)</text>
        <dbReference type="Rhea" id="RHEA:28342"/>
        <dbReference type="ChEBI" id="CHEBI:15377"/>
        <dbReference type="ChEBI" id="CHEBI:15378"/>
        <dbReference type="ChEBI" id="CHEBI:33019"/>
        <dbReference type="ChEBI" id="CHEBI:61194"/>
        <dbReference type="ChEBI" id="CHEBI:61382"/>
        <dbReference type="EC" id="3.6.1.66"/>
    </reaction>
    <physiologicalReaction direction="left-to-right" evidence="1">
        <dbReference type="Rhea" id="RHEA:28343"/>
    </physiologicalReaction>
</comment>
<comment type="catalytic activity">
    <reaction evidence="1">
        <text>XTP + H2O = XMP + diphosphate + H(+)</text>
        <dbReference type="Rhea" id="RHEA:28610"/>
        <dbReference type="ChEBI" id="CHEBI:15377"/>
        <dbReference type="ChEBI" id="CHEBI:15378"/>
        <dbReference type="ChEBI" id="CHEBI:33019"/>
        <dbReference type="ChEBI" id="CHEBI:57464"/>
        <dbReference type="ChEBI" id="CHEBI:61314"/>
        <dbReference type="EC" id="3.6.1.66"/>
    </reaction>
    <physiologicalReaction direction="left-to-right" evidence="1">
        <dbReference type="Rhea" id="RHEA:28611"/>
    </physiologicalReaction>
</comment>
<comment type="cofactor">
    <cofactor evidence="1">
        <name>Mg(2+)</name>
        <dbReference type="ChEBI" id="CHEBI:18420"/>
    </cofactor>
    <cofactor evidence="1">
        <name>Mn(2+)</name>
        <dbReference type="ChEBI" id="CHEBI:29035"/>
    </cofactor>
    <text evidence="1">Binds 1 divalent metal cation per subunit; can use either Mg(2+) or Mn(2+).</text>
</comment>
<comment type="subunit">
    <text evidence="1">Homodimer.</text>
</comment>
<comment type="subcellular location">
    <subcellularLocation>
        <location evidence="1">Cytoplasm</location>
    </subcellularLocation>
    <subcellularLocation>
        <location evidence="1">Nucleus</location>
    </subcellularLocation>
</comment>
<comment type="similarity">
    <text evidence="1">Belongs to the HAM1 NTPase family.</text>
</comment>
<protein>
    <recommendedName>
        <fullName evidence="1">Inosine triphosphate pyrophosphatase</fullName>
        <shortName evidence="1">ITPase</shortName>
        <shortName evidence="1">Inosine triphosphatase</shortName>
        <ecNumber evidence="1">3.6.1.66</ecNumber>
    </recommendedName>
    <alternativeName>
        <fullName evidence="1">Non-canonical purine NTP pyrophosphatase</fullName>
    </alternativeName>
    <alternativeName>
        <fullName evidence="1">Non-standard purine NTP pyrophosphatase</fullName>
    </alternativeName>
    <alternativeName>
        <fullName evidence="1">Nucleoside-triphosphate diphosphatase</fullName>
    </alternativeName>
    <alternativeName>
        <fullName evidence="1">Nucleoside-triphosphate pyrophosphatase</fullName>
        <shortName evidence="1">NTPase</shortName>
    </alternativeName>
    <alternativeName>
        <fullName evidence="1">XTP/dITP diphosphatase</fullName>
    </alternativeName>
</protein>
<evidence type="ECO:0000255" key="1">
    <source>
        <dbReference type="HAMAP-Rule" id="MF_03148"/>
    </source>
</evidence>
<organism>
    <name type="scientific">Fusarium vanettenii (strain ATCC MYA-4622 / CBS 123669 / FGSC 9596 / NRRL 45880 / 77-13-4)</name>
    <name type="common">Fusarium solani subsp. pisi</name>
    <dbReference type="NCBI Taxonomy" id="660122"/>
    <lineage>
        <taxon>Eukaryota</taxon>
        <taxon>Fungi</taxon>
        <taxon>Dikarya</taxon>
        <taxon>Ascomycota</taxon>
        <taxon>Pezizomycotina</taxon>
        <taxon>Sordariomycetes</taxon>
        <taxon>Hypocreomycetidae</taxon>
        <taxon>Hypocreales</taxon>
        <taxon>Nectriaceae</taxon>
        <taxon>Fusarium</taxon>
        <taxon>Fusarium solani species complex</taxon>
        <taxon>Fusarium vanettenii</taxon>
    </lineage>
</organism>
<keyword id="KW-0963">Cytoplasm</keyword>
<keyword id="KW-0378">Hydrolase</keyword>
<keyword id="KW-0460">Magnesium</keyword>
<keyword id="KW-0464">Manganese</keyword>
<keyword id="KW-0479">Metal-binding</keyword>
<keyword id="KW-0546">Nucleotide metabolism</keyword>
<keyword id="KW-0547">Nucleotide-binding</keyword>
<keyword id="KW-0539">Nucleus</keyword>
<keyword id="KW-1185">Reference proteome</keyword>
<sequence>MAAHKVNFITGNANKLREVKAILEPEIEVTSKSIDLEEVQGTLEEVTESKCRRAAELVKGPVLVEDTALCYTALGGLPGAYIKWFLTTIGHQGLNNLLAAYTDKSAEAVCTFGYCAGPGEKVILFQGRCPGKIVPARGPNNFGWDPVFEYEGQTFAEMDKVEKNKISHRSRALAKLQAWFKEQQ</sequence>
<proteinExistence type="inferred from homology"/>
<name>ITPA_FUSV7</name>